<keyword id="KW-0021">Allosteric enzyme</keyword>
<keyword id="KW-0028">Amino-acid biosynthesis</keyword>
<keyword id="KW-0150">Chloroplast</keyword>
<keyword id="KW-0220">Diaminopimelate biosynthesis</keyword>
<keyword id="KW-0903">Direct protein sequencing</keyword>
<keyword id="KW-0456">Lyase</keyword>
<keyword id="KW-0457">Lysine biosynthesis</keyword>
<keyword id="KW-0934">Plastid</keyword>
<keyword id="KW-1185">Reference proteome</keyword>
<keyword id="KW-0704">Schiff base</keyword>
<keyword id="KW-0809">Transit peptide</keyword>
<proteinExistence type="evidence at protein level"/>
<organism>
    <name type="scientific">Triticum aestivum</name>
    <name type="common">Wheat</name>
    <dbReference type="NCBI Taxonomy" id="4565"/>
    <lineage>
        <taxon>Eukaryota</taxon>
        <taxon>Viridiplantae</taxon>
        <taxon>Streptophyta</taxon>
        <taxon>Embryophyta</taxon>
        <taxon>Tracheophyta</taxon>
        <taxon>Spermatophyta</taxon>
        <taxon>Magnoliopsida</taxon>
        <taxon>Liliopsida</taxon>
        <taxon>Poales</taxon>
        <taxon>Poaceae</taxon>
        <taxon>BOP clade</taxon>
        <taxon>Pooideae</taxon>
        <taxon>Triticodae</taxon>
        <taxon>Triticeae</taxon>
        <taxon>Triticinae</taxon>
        <taxon>Triticum</taxon>
    </lineage>
</organism>
<sequence length="377" mass="40876">MMAAQPTANPGVRLGWKAPGALASPPRLALSRSAAAPLASHRVGRGKFSAAAITTDDYLPMRSTEVKNRTSVDGIKSLRLITAVKTPYLPDGRFDLEAYDSLINTQINGGAEGVIVGGTTGEGHLMSWDEHIMLIGHTVNCFGTNIKVIGNTGSNSTREAIHASEQGFAVGMHAALHVNPYYGKTSTAGLISHFDEVLPMGPTIIYNVPSRTGQDIPPAVIEALSTYPNMAGVKECVGHERVKCYTDKGITIWSGNDDECHDSRWKYGATGVISVTSNLVPGLMRSLMFEGENAALNEKLLPLMKWLFSEPNPIGLNTALAQLGVVRPVFRRPYAPLSLEKRTEFVRIVEAIGRENFVGQKEVRVLDDDDFVLISRY</sequence>
<protein>
    <recommendedName>
        <fullName>4-hydroxy-tetrahydrodipicolinate synthase 2, chloroplastic</fullName>
        <shortName>HTPA synthase 2</shortName>
        <ecNumber>4.3.3.7</ecNumber>
    </recommendedName>
</protein>
<name>DAPA2_WHEAT</name>
<evidence type="ECO:0000250" key="1"/>
<evidence type="ECO:0000269" key="2">
    <source>
    </source>
</evidence>
<evidence type="ECO:0000305" key="3"/>
<reference key="1">
    <citation type="journal article" date="1990" name="J. Biol. Chem.">
        <title>Molecular cloning of wheat dihydrodipicolinate synthase.</title>
        <authorList>
            <person name="Kaneko T."/>
            <person name="Hashimoto T."/>
            <person name="Kumpaisal R."/>
            <person name="Yamada Y."/>
        </authorList>
    </citation>
    <scope>NUCLEOTIDE SEQUENCE [MRNA]</scope>
    <scope>PROTEIN SEQUENCE OF 52-68</scope>
    <source>
        <strain>cv. Chinese Spring</strain>
    </source>
</reference>
<accession>P24847</accession>
<feature type="transit peptide" description="Chloroplast" evidence="2">
    <location>
        <begin position="1"/>
        <end position="51"/>
    </location>
</feature>
<feature type="chain" id="PRO_0000007204" description="4-hydroxy-tetrahydrodipicolinate synthase 2, chloroplastic">
    <location>
        <begin position="52"/>
        <end position="377"/>
    </location>
</feature>
<feature type="active site" description="Proton donor/acceptor" evidence="1">
    <location>
        <position position="206"/>
    </location>
</feature>
<feature type="active site" description="Schiff-base intermediate with substrate" evidence="1">
    <location>
        <position position="234"/>
    </location>
</feature>
<feature type="binding site" evidence="1">
    <location>
        <position position="120"/>
    </location>
    <ligand>
        <name>pyruvate</name>
        <dbReference type="ChEBI" id="CHEBI:15361"/>
    </ligand>
</feature>
<feature type="binding site" evidence="1">
    <location>
        <position position="273"/>
    </location>
    <ligand>
        <name>pyruvate</name>
        <dbReference type="ChEBI" id="CHEBI:15361"/>
    </ligand>
</feature>
<feature type="site" description="Part of a proton relay during catalysis" evidence="1">
    <location>
        <position position="119"/>
    </location>
</feature>
<feature type="site" description="Part of a proton relay during catalysis" evidence="1">
    <location>
        <position position="182"/>
    </location>
</feature>
<dbReference type="EC" id="4.3.3.7"/>
<dbReference type="EMBL" id="M60599">
    <property type="protein sequence ID" value="AAA34264.1"/>
    <property type="molecule type" value="mRNA"/>
</dbReference>
<dbReference type="PIR" id="B39213">
    <property type="entry name" value="WZWTH6"/>
</dbReference>
<dbReference type="SMR" id="P24847"/>
<dbReference type="STRING" id="4565.P24847"/>
<dbReference type="PaxDb" id="4565-Traes_2DL_D0B92E21B.1"/>
<dbReference type="eggNOG" id="ENOG502QQ8M">
    <property type="taxonomic scope" value="Eukaryota"/>
</dbReference>
<dbReference type="UniPathway" id="UPA00034">
    <property type="reaction ID" value="UER00017"/>
</dbReference>
<dbReference type="Proteomes" id="UP000019116">
    <property type="component" value="Unplaced"/>
</dbReference>
<dbReference type="ExpressionAtlas" id="P24847">
    <property type="expression patterns" value="baseline"/>
</dbReference>
<dbReference type="GO" id="GO:0009507">
    <property type="term" value="C:chloroplast"/>
    <property type="evidence" value="ECO:0007669"/>
    <property type="project" value="UniProtKB-SubCell"/>
</dbReference>
<dbReference type="GO" id="GO:0008840">
    <property type="term" value="F:4-hydroxy-tetrahydrodipicolinate synthase activity"/>
    <property type="evidence" value="ECO:0000318"/>
    <property type="project" value="GO_Central"/>
</dbReference>
<dbReference type="GO" id="GO:0019877">
    <property type="term" value="P:diaminopimelate biosynthetic process"/>
    <property type="evidence" value="ECO:0007669"/>
    <property type="project" value="UniProtKB-KW"/>
</dbReference>
<dbReference type="GO" id="GO:0009089">
    <property type="term" value="P:lysine biosynthetic process via diaminopimelate"/>
    <property type="evidence" value="ECO:0007669"/>
    <property type="project" value="UniProtKB-UniPathway"/>
</dbReference>
<dbReference type="CDD" id="cd00950">
    <property type="entry name" value="DHDPS"/>
    <property type="match status" value="1"/>
</dbReference>
<dbReference type="Gene3D" id="3.20.20.70">
    <property type="entry name" value="Aldolase class I"/>
    <property type="match status" value="1"/>
</dbReference>
<dbReference type="InterPro" id="IPR013785">
    <property type="entry name" value="Aldolase_TIM"/>
</dbReference>
<dbReference type="InterPro" id="IPR005263">
    <property type="entry name" value="DapA"/>
</dbReference>
<dbReference type="InterPro" id="IPR002220">
    <property type="entry name" value="DapA-like"/>
</dbReference>
<dbReference type="InterPro" id="IPR020625">
    <property type="entry name" value="Schiff_base-form_aldolases_AS"/>
</dbReference>
<dbReference type="InterPro" id="IPR020624">
    <property type="entry name" value="Schiff_base-form_aldolases_CS"/>
</dbReference>
<dbReference type="NCBIfam" id="TIGR00674">
    <property type="entry name" value="dapA"/>
    <property type="match status" value="1"/>
</dbReference>
<dbReference type="PANTHER" id="PTHR12128:SF55">
    <property type="entry name" value="4-HYDROXY-TETRAHYDRODIPICOLINATE SYNTHASE 2, CHLOROPLASTIC"/>
    <property type="match status" value="1"/>
</dbReference>
<dbReference type="PANTHER" id="PTHR12128">
    <property type="entry name" value="DIHYDRODIPICOLINATE SYNTHASE"/>
    <property type="match status" value="1"/>
</dbReference>
<dbReference type="Pfam" id="PF00701">
    <property type="entry name" value="DHDPS"/>
    <property type="match status" value="1"/>
</dbReference>
<dbReference type="PRINTS" id="PR00146">
    <property type="entry name" value="DHPICSNTHASE"/>
</dbReference>
<dbReference type="SMART" id="SM01130">
    <property type="entry name" value="DHDPS"/>
    <property type="match status" value="1"/>
</dbReference>
<dbReference type="SUPFAM" id="SSF51569">
    <property type="entry name" value="Aldolase"/>
    <property type="match status" value="1"/>
</dbReference>
<dbReference type="PROSITE" id="PS00665">
    <property type="entry name" value="DHDPS_1"/>
    <property type="match status" value="1"/>
</dbReference>
<dbReference type="PROSITE" id="PS00666">
    <property type="entry name" value="DHDPS_2"/>
    <property type="match status" value="1"/>
</dbReference>
<comment type="function">
    <text evidence="1">Catalyzes the condensation of (S)-aspartate-beta-semialdehyde [(S)-ASA] and pyruvate to 4-hydroxy-tetrahydrodipicolinate (HTPA).</text>
</comment>
<comment type="catalytic activity">
    <reaction>
        <text>L-aspartate 4-semialdehyde + pyruvate = (2S,4S)-4-hydroxy-2,3,4,5-tetrahydrodipicolinate + H2O + H(+)</text>
        <dbReference type="Rhea" id="RHEA:34171"/>
        <dbReference type="ChEBI" id="CHEBI:15361"/>
        <dbReference type="ChEBI" id="CHEBI:15377"/>
        <dbReference type="ChEBI" id="CHEBI:15378"/>
        <dbReference type="ChEBI" id="CHEBI:67139"/>
        <dbReference type="ChEBI" id="CHEBI:537519"/>
        <dbReference type="EC" id="4.3.3.7"/>
    </reaction>
</comment>
<comment type="activity regulation">
    <text>Sensitive to lysine inhibition. This inhibition increase in an allosteric manner with increasing concentration of the inhibitor.</text>
</comment>
<comment type="pathway">
    <text>Amino-acid biosynthesis; L-lysine biosynthesis via DAP pathway; (S)-tetrahydrodipicolinate from L-aspartate: step 3/4.</text>
</comment>
<comment type="subunit">
    <text>Tetramer of modified subunits derived from two genes in different combinations.</text>
</comment>
<comment type="subcellular location">
    <subcellularLocation>
        <location>Plastid</location>
        <location>Chloroplast</location>
    </subcellularLocation>
</comment>
<comment type="similarity">
    <text evidence="3">Belongs to the DapA family.</text>
</comment>
<comment type="caution">
    <text evidence="3">Was originally thought to be a dihydrodipicolinate synthase (DHDPS), catalyzing the condensation of (S)-aspartate-beta-semialdehyde [(S)-ASA] and pyruvate to dihydrodipicolinate (DHDP). However, it was shown in E.coli that the product of the enzymatic reaction is not dihydrodipicolinate but in fact (4S)-4-hydroxy-2,3,4,5-tetrahydro-(2S)-dipicolinic acid (HTPA), and that the consecutive dehydration reaction leading to DHDP is not spontaneous but catalyzed by DapB.</text>
</comment>